<name>AMPA_WIGBR</name>
<protein>
    <recommendedName>
        <fullName evidence="1">Probable cytosol aminopeptidase</fullName>
        <ecNumber evidence="1">3.4.11.1</ecNumber>
    </recommendedName>
    <alternativeName>
        <fullName evidence="1">Leucine aminopeptidase</fullName>
        <shortName evidence="1">LAP</shortName>
        <ecNumber evidence="1">3.4.11.10</ecNumber>
    </alternativeName>
    <alternativeName>
        <fullName evidence="1">Leucyl aminopeptidase</fullName>
    </alternativeName>
</protein>
<proteinExistence type="inferred from homology"/>
<dbReference type="EC" id="3.4.11.1" evidence="1"/>
<dbReference type="EC" id="3.4.11.10" evidence="1"/>
<dbReference type="EMBL" id="BA000021">
    <property type="protein sequence ID" value="BAC24605.1"/>
    <property type="molecule type" value="Genomic_DNA"/>
</dbReference>
<dbReference type="SMR" id="Q8D295"/>
<dbReference type="STRING" id="36870.gene:10368962"/>
<dbReference type="MEROPS" id="M17.003"/>
<dbReference type="KEGG" id="wbr:pepA"/>
<dbReference type="eggNOG" id="COG0260">
    <property type="taxonomic scope" value="Bacteria"/>
</dbReference>
<dbReference type="HOGENOM" id="CLU_013734_0_0_6"/>
<dbReference type="OrthoDB" id="9809354at2"/>
<dbReference type="Proteomes" id="UP000000562">
    <property type="component" value="Chromosome"/>
</dbReference>
<dbReference type="GO" id="GO:0005737">
    <property type="term" value="C:cytoplasm"/>
    <property type="evidence" value="ECO:0007669"/>
    <property type="project" value="UniProtKB-SubCell"/>
</dbReference>
<dbReference type="GO" id="GO:0030145">
    <property type="term" value="F:manganese ion binding"/>
    <property type="evidence" value="ECO:0007669"/>
    <property type="project" value="UniProtKB-UniRule"/>
</dbReference>
<dbReference type="GO" id="GO:0070006">
    <property type="term" value="F:metalloaminopeptidase activity"/>
    <property type="evidence" value="ECO:0007669"/>
    <property type="project" value="InterPro"/>
</dbReference>
<dbReference type="GO" id="GO:0006508">
    <property type="term" value="P:proteolysis"/>
    <property type="evidence" value="ECO:0007669"/>
    <property type="project" value="UniProtKB-KW"/>
</dbReference>
<dbReference type="CDD" id="cd00433">
    <property type="entry name" value="Peptidase_M17"/>
    <property type="match status" value="1"/>
</dbReference>
<dbReference type="Gene3D" id="3.40.220.10">
    <property type="entry name" value="Leucine Aminopeptidase, subunit E, domain 1"/>
    <property type="match status" value="1"/>
</dbReference>
<dbReference type="Gene3D" id="3.40.630.10">
    <property type="entry name" value="Zn peptidases"/>
    <property type="match status" value="1"/>
</dbReference>
<dbReference type="HAMAP" id="MF_00181">
    <property type="entry name" value="Cytosol_peptidase_M17"/>
    <property type="match status" value="1"/>
</dbReference>
<dbReference type="InterPro" id="IPR011356">
    <property type="entry name" value="Leucine_aapep/pepB"/>
</dbReference>
<dbReference type="InterPro" id="IPR043472">
    <property type="entry name" value="Macro_dom-like"/>
</dbReference>
<dbReference type="InterPro" id="IPR000819">
    <property type="entry name" value="Peptidase_M17_C"/>
</dbReference>
<dbReference type="InterPro" id="IPR023042">
    <property type="entry name" value="Peptidase_M17_leu_NH2_pept"/>
</dbReference>
<dbReference type="InterPro" id="IPR008283">
    <property type="entry name" value="Peptidase_M17_N"/>
</dbReference>
<dbReference type="NCBIfam" id="NF002074">
    <property type="entry name" value="PRK00913.1-4"/>
    <property type="match status" value="1"/>
</dbReference>
<dbReference type="PANTHER" id="PTHR11963:SF23">
    <property type="entry name" value="CYTOSOL AMINOPEPTIDASE"/>
    <property type="match status" value="1"/>
</dbReference>
<dbReference type="PANTHER" id="PTHR11963">
    <property type="entry name" value="LEUCINE AMINOPEPTIDASE-RELATED"/>
    <property type="match status" value="1"/>
</dbReference>
<dbReference type="Pfam" id="PF00883">
    <property type="entry name" value="Peptidase_M17"/>
    <property type="match status" value="1"/>
</dbReference>
<dbReference type="Pfam" id="PF02789">
    <property type="entry name" value="Peptidase_M17_N"/>
    <property type="match status" value="1"/>
</dbReference>
<dbReference type="PRINTS" id="PR00481">
    <property type="entry name" value="LAMNOPPTDASE"/>
</dbReference>
<dbReference type="SUPFAM" id="SSF52949">
    <property type="entry name" value="Macro domain-like"/>
    <property type="match status" value="1"/>
</dbReference>
<dbReference type="SUPFAM" id="SSF53187">
    <property type="entry name" value="Zn-dependent exopeptidases"/>
    <property type="match status" value="1"/>
</dbReference>
<dbReference type="PROSITE" id="PS00631">
    <property type="entry name" value="CYTOSOL_AP"/>
    <property type="match status" value="1"/>
</dbReference>
<gene>
    <name evidence="1" type="primary">pepA</name>
    <name type="ordered locus">WIGBR4590</name>
</gene>
<reference key="1">
    <citation type="journal article" date="2002" name="Nat. Genet.">
        <title>Genome sequence of the endocellular obligate symbiont of tsetse flies, Wigglesworthia glossinidia.</title>
        <authorList>
            <person name="Akman L."/>
            <person name="Yamashita A."/>
            <person name="Watanabe H."/>
            <person name="Oshima K."/>
            <person name="Shiba T."/>
            <person name="Hattori M."/>
            <person name="Aksoy S."/>
        </authorList>
    </citation>
    <scope>NUCLEOTIDE SEQUENCE [LARGE SCALE GENOMIC DNA]</scope>
</reference>
<accession>Q8D295</accession>
<organism>
    <name type="scientific">Wigglesworthia glossinidia brevipalpis</name>
    <dbReference type="NCBI Taxonomy" id="36870"/>
    <lineage>
        <taxon>Bacteria</taxon>
        <taxon>Pseudomonadati</taxon>
        <taxon>Pseudomonadota</taxon>
        <taxon>Gammaproteobacteria</taxon>
        <taxon>Enterobacterales</taxon>
        <taxon>Erwiniaceae</taxon>
        <taxon>Wigglesworthia</taxon>
    </lineage>
</organism>
<sequence>MKFSIADKSIKQTKDILLILGIFYKDCYQKTLKYISDENKKNIIQVVKNIKIKDNIGSTYFISNTNKVGSNPILLIMLGSKVNINSRIYKKLIINTISSIKNIKYKKSIFFLLNLNFNNSNLYWKIRRSIEYIYESLYEFNNFKSKTKSYKIYMKEIMFYIHDENEIKQANIAISHSVSISKGIIITKNLGNMPSNFCDPHYLSHQSYILKDKYSEKISVEIMDHKKIKNIGMNAYLHVSKGSSKNPYLSIIKYNENKFNGKSPIILIGKGLTFDSGGISIKPSNNMDEMKFDMCGAAAVLGVMHAISELNLNLYVIGILACCENMVDSSSYKPGDIIKTLSGKTVEVINTDAEGRLVLCDVITYVKRFNPRIVIDIATLTGACVIALGHHYTGLISNCDELSENILNASNITEDLAWRLPLNKKFSKQLKSRFADISNISDRSGSAITAGCFLYEFAKEYKWAHLDIAGTAWKSGVYKQATGRPVSLLTQLLINYGDKKI</sequence>
<keyword id="KW-0031">Aminopeptidase</keyword>
<keyword id="KW-0963">Cytoplasm</keyword>
<keyword id="KW-0378">Hydrolase</keyword>
<keyword id="KW-0464">Manganese</keyword>
<keyword id="KW-0479">Metal-binding</keyword>
<keyword id="KW-0645">Protease</keyword>
<keyword id="KW-1185">Reference proteome</keyword>
<comment type="function">
    <text evidence="1">Presumably involved in the processing and regular turnover of intracellular proteins. Catalyzes the removal of unsubstituted N-terminal amino acids from various peptides.</text>
</comment>
<comment type="catalytic activity">
    <reaction evidence="1">
        <text>Release of an N-terminal amino acid, Xaa-|-Yaa-, in which Xaa is preferably Leu, but may be other amino acids including Pro although not Arg or Lys, and Yaa may be Pro. Amino acid amides and methyl esters are also readily hydrolyzed, but rates on arylamides are exceedingly low.</text>
        <dbReference type="EC" id="3.4.11.1"/>
    </reaction>
</comment>
<comment type="catalytic activity">
    <reaction evidence="1">
        <text>Release of an N-terminal amino acid, preferentially leucine, but not glutamic or aspartic acids.</text>
        <dbReference type="EC" id="3.4.11.10"/>
    </reaction>
</comment>
<comment type="cofactor">
    <cofactor evidence="1">
        <name>Mn(2+)</name>
        <dbReference type="ChEBI" id="CHEBI:29035"/>
    </cofactor>
    <text evidence="1">Binds 2 manganese ions per subunit.</text>
</comment>
<comment type="subcellular location">
    <subcellularLocation>
        <location evidence="1">Cytoplasm</location>
    </subcellularLocation>
</comment>
<comment type="similarity">
    <text evidence="1">Belongs to the peptidase M17 family.</text>
</comment>
<feature type="chain" id="PRO_0000165813" description="Probable cytosol aminopeptidase">
    <location>
        <begin position="1"/>
        <end position="501"/>
    </location>
</feature>
<feature type="active site" evidence="1">
    <location>
        <position position="282"/>
    </location>
</feature>
<feature type="active site" evidence="1">
    <location>
        <position position="356"/>
    </location>
</feature>
<feature type="binding site" evidence="1">
    <location>
        <position position="270"/>
    </location>
    <ligand>
        <name>Mn(2+)</name>
        <dbReference type="ChEBI" id="CHEBI:29035"/>
        <label>2</label>
    </ligand>
</feature>
<feature type="binding site" evidence="1">
    <location>
        <position position="275"/>
    </location>
    <ligand>
        <name>Mn(2+)</name>
        <dbReference type="ChEBI" id="CHEBI:29035"/>
        <label>1</label>
    </ligand>
</feature>
<feature type="binding site" evidence="1">
    <location>
        <position position="275"/>
    </location>
    <ligand>
        <name>Mn(2+)</name>
        <dbReference type="ChEBI" id="CHEBI:29035"/>
        <label>2</label>
    </ligand>
</feature>
<feature type="binding site" evidence="1">
    <location>
        <position position="293"/>
    </location>
    <ligand>
        <name>Mn(2+)</name>
        <dbReference type="ChEBI" id="CHEBI:29035"/>
        <label>2</label>
    </ligand>
</feature>
<feature type="binding site" evidence="1">
    <location>
        <position position="352"/>
    </location>
    <ligand>
        <name>Mn(2+)</name>
        <dbReference type="ChEBI" id="CHEBI:29035"/>
        <label>1</label>
    </ligand>
</feature>
<feature type="binding site" evidence="1">
    <location>
        <position position="354"/>
    </location>
    <ligand>
        <name>Mn(2+)</name>
        <dbReference type="ChEBI" id="CHEBI:29035"/>
        <label>1</label>
    </ligand>
</feature>
<feature type="binding site" evidence="1">
    <location>
        <position position="354"/>
    </location>
    <ligand>
        <name>Mn(2+)</name>
        <dbReference type="ChEBI" id="CHEBI:29035"/>
        <label>2</label>
    </ligand>
</feature>
<evidence type="ECO:0000255" key="1">
    <source>
        <dbReference type="HAMAP-Rule" id="MF_00181"/>
    </source>
</evidence>